<feature type="chain" id="PRO_0000290134" description="sn-glycerol-3-phosphate transport system permease protein UgpA">
    <location>
        <begin position="1"/>
        <end position="293"/>
    </location>
</feature>
<feature type="transmembrane region" description="Helical" evidence="3">
    <location>
        <begin position="10"/>
        <end position="30"/>
    </location>
</feature>
<feature type="transmembrane region" description="Helical" evidence="3">
    <location>
        <begin position="72"/>
        <end position="92"/>
    </location>
</feature>
<feature type="transmembrane region" description="Helical" evidence="3">
    <location>
        <begin position="108"/>
        <end position="128"/>
    </location>
</feature>
<feature type="transmembrane region" description="Helical" evidence="3">
    <location>
        <begin position="155"/>
        <end position="177"/>
    </location>
</feature>
<feature type="transmembrane region" description="Helical" evidence="3">
    <location>
        <begin position="204"/>
        <end position="224"/>
    </location>
</feature>
<feature type="transmembrane region" description="Helical" evidence="3">
    <location>
        <begin position="261"/>
        <end position="281"/>
    </location>
</feature>
<feature type="domain" description="ABC transmembrane type-1" evidence="3">
    <location>
        <begin position="66"/>
        <end position="282"/>
    </location>
</feature>
<dbReference type="EMBL" id="AE014292">
    <property type="protein sequence ID" value="AAN33845.1"/>
    <property type="molecule type" value="Genomic_DNA"/>
</dbReference>
<dbReference type="EMBL" id="CP002998">
    <property type="protein sequence ID" value="AEM20121.1"/>
    <property type="molecule type" value="Genomic_DNA"/>
</dbReference>
<dbReference type="RefSeq" id="WP_004687240.1">
    <property type="nucleotide sequence ID" value="NZ_KN046805.1"/>
</dbReference>
<dbReference type="SMR" id="Q8FW09"/>
<dbReference type="GeneID" id="97535230"/>
<dbReference type="KEGG" id="bms:BRA0656"/>
<dbReference type="KEGG" id="bsi:BS1330_II0650"/>
<dbReference type="PATRIC" id="fig|204722.21.peg.478"/>
<dbReference type="HOGENOM" id="CLU_016047_0_2_5"/>
<dbReference type="PhylomeDB" id="Q8FW09"/>
<dbReference type="PRO" id="PR:Q8FW09"/>
<dbReference type="Proteomes" id="UP000007104">
    <property type="component" value="Chromosome II"/>
</dbReference>
<dbReference type="GO" id="GO:0005886">
    <property type="term" value="C:plasma membrane"/>
    <property type="evidence" value="ECO:0007669"/>
    <property type="project" value="UniProtKB-SubCell"/>
</dbReference>
<dbReference type="GO" id="GO:0055085">
    <property type="term" value="P:transmembrane transport"/>
    <property type="evidence" value="ECO:0007669"/>
    <property type="project" value="InterPro"/>
</dbReference>
<dbReference type="CDD" id="cd06261">
    <property type="entry name" value="TM_PBP2"/>
    <property type="match status" value="1"/>
</dbReference>
<dbReference type="Gene3D" id="1.10.3720.10">
    <property type="entry name" value="MetI-like"/>
    <property type="match status" value="1"/>
</dbReference>
<dbReference type="InterPro" id="IPR000515">
    <property type="entry name" value="MetI-like"/>
</dbReference>
<dbReference type="InterPro" id="IPR035906">
    <property type="entry name" value="MetI-like_sf"/>
</dbReference>
<dbReference type="InterPro" id="IPR050809">
    <property type="entry name" value="UgpAE/MalFG_permease"/>
</dbReference>
<dbReference type="NCBIfam" id="NF007852">
    <property type="entry name" value="PRK10561.1"/>
    <property type="match status" value="1"/>
</dbReference>
<dbReference type="PANTHER" id="PTHR43227">
    <property type="entry name" value="BLL4140 PROTEIN"/>
    <property type="match status" value="1"/>
</dbReference>
<dbReference type="PANTHER" id="PTHR43227:SF9">
    <property type="entry name" value="SN-GLYCEROL-3-PHOSPHATE TRANSPORT SYSTEM PERMEASE PROTEIN UGPA"/>
    <property type="match status" value="1"/>
</dbReference>
<dbReference type="Pfam" id="PF00528">
    <property type="entry name" value="BPD_transp_1"/>
    <property type="match status" value="1"/>
</dbReference>
<dbReference type="SUPFAM" id="SSF161098">
    <property type="entry name" value="MetI-like"/>
    <property type="match status" value="1"/>
</dbReference>
<dbReference type="PROSITE" id="PS50928">
    <property type="entry name" value="ABC_TM1"/>
    <property type="match status" value="1"/>
</dbReference>
<gene>
    <name type="primary">ugpA</name>
    <name type="ordered locus">BRA0656</name>
    <name type="ordered locus">BS1330_II0650</name>
</gene>
<reference key="1">
    <citation type="journal article" date="2002" name="Proc. Natl. Acad. Sci. U.S.A.">
        <title>The Brucella suis genome reveals fundamental similarities between animal and plant pathogens and symbionts.</title>
        <authorList>
            <person name="Paulsen I.T."/>
            <person name="Seshadri R."/>
            <person name="Nelson K.E."/>
            <person name="Eisen J.A."/>
            <person name="Heidelberg J.F."/>
            <person name="Read T.D."/>
            <person name="Dodson R.J."/>
            <person name="Umayam L.A."/>
            <person name="Brinkac L.M."/>
            <person name="Beanan M.J."/>
            <person name="Daugherty S.C."/>
            <person name="DeBoy R.T."/>
            <person name="Durkin A.S."/>
            <person name="Kolonay J.F."/>
            <person name="Madupu R."/>
            <person name="Nelson W.C."/>
            <person name="Ayodeji B."/>
            <person name="Kraul M."/>
            <person name="Shetty J."/>
            <person name="Malek J.A."/>
            <person name="Van Aken S.E."/>
            <person name="Riedmuller S."/>
            <person name="Tettelin H."/>
            <person name="Gill S.R."/>
            <person name="White O."/>
            <person name="Salzberg S.L."/>
            <person name="Hoover D.L."/>
            <person name="Lindler L.E."/>
            <person name="Halling S.M."/>
            <person name="Boyle S.M."/>
            <person name="Fraser C.M."/>
        </authorList>
    </citation>
    <scope>NUCLEOTIDE SEQUENCE [LARGE SCALE GENOMIC DNA]</scope>
    <source>
        <strain>1330</strain>
    </source>
</reference>
<reference key="2">
    <citation type="journal article" date="2011" name="J. Bacteriol.">
        <title>Revised genome sequence of Brucella suis 1330.</title>
        <authorList>
            <person name="Tae H."/>
            <person name="Shallom S."/>
            <person name="Settlage R."/>
            <person name="Preston D."/>
            <person name="Adams L.G."/>
            <person name="Garner H.R."/>
        </authorList>
    </citation>
    <scope>NUCLEOTIDE SEQUENCE [LARGE SCALE GENOMIC DNA]</scope>
    <source>
        <strain>1330</strain>
    </source>
</reference>
<organism>
    <name type="scientific">Brucella suis biovar 1 (strain 1330)</name>
    <dbReference type="NCBI Taxonomy" id="204722"/>
    <lineage>
        <taxon>Bacteria</taxon>
        <taxon>Pseudomonadati</taxon>
        <taxon>Pseudomonadota</taxon>
        <taxon>Alphaproteobacteria</taxon>
        <taxon>Hyphomicrobiales</taxon>
        <taxon>Brucellaceae</taxon>
        <taxon>Brucella/Ochrobactrum group</taxon>
        <taxon>Brucella</taxon>
    </lineage>
</organism>
<comment type="function">
    <text evidence="1">Part of the ABC transporter complex UgpBAEC involved in sn-glycerol-3-phosphate (G3P) import. Probably responsible for the translocation of the substrate across the membrane.</text>
</comment>
<comment type="subunit">
    <text evidence="1">The complex is composed of two ATP-binding proteins (UgpC), two transmembrane proteins (UgpA and UgpE) and a solute-binding protein (UgpB).</text>
</comment>
<comment type="subcellular location">
    <subcellularLocation>
        <location evidence="1">Cell inner membrane</location>
        <topology evidence="2">Multi-pass membrane protein</topology>
    </subcellularLocation>
</comment>
<comment type="similarity">
    <text evidence="4">Belongs to the binding-protein-dependent transport system permease family.</text>
</comment>
<keyword id="KW-0997">Cell inner membrane</keyword>
<keyword id="KW-1003">Cell membrane</keyword>
<keyword id="KW-0472">Membrane</keyword>
<keyword id="KW-0812">Transmembrane</keyword>
<keyword id="KW-1133">Transmembrane helix</keyword>
<keyword id="KW-0813">Transport</keyword>
<proteinExistence type="inferred from homology"/>
<sequence length="293" mass="32401">MQKVTFPNKILPYFLLAPQIVLTVVFFFWPASQAIYQSFMREDAFGLKSTFVELANFTAVLSDPNYLHSVQVTVVFNVLTALLAMGVALLLATAADRVIRGQTFYRTLLIWPYAVAPAVAGMLWLFMFNPAMGTFAYLLRRNGIAWDPLLDGNQAMGLVVVAAAWKQISYNFLFFVAGLQAIPKSLIEAAAIDGARGARRFWTIVFPLLAPTSFFLLVVNTVYAFFDTFGIIHAVTGGGPAKATETLVYKVYNDGFVNLNLGSSSAQSVILMAIVIALTAFQFRFVEKRVHYS</sequence>
<name>UGPA_BRUSU</name>
<accession>Q8FW09</accession>
<accession>G0KD33</accession>
<protein>
    <recommendedName>
        <fullName evidence="1">sn-glycerol-3-phosphate transport system permease protein UgpA</fullName>
    </recommendedName>
</protein>
<evidence type="ECO:0000250" key="1">
    <source>
        <dbReference type="UniProtKB" id="P10905"/>
    </source>
</evidence>
<evidence type="ECO:0000255" key="2"/>
<evidence type="ECO:0000255" key="3">
    <source>
        <dbReference type="PROSITE-ProRule" id="PRU00441"/>
    </source>
</evidence>
<evidence type="ECO:0000305" key="4"/>